<dbReference type="EMBL" id="AM406671">
    <property type="protein sequence ID" value="CAL96609.1"/>
    <property type="molecule type" value="Genomic_DNA"/>
</dbReference>
<dbReference type="RefSeq" id="WP_011675078.1">
    <property type="nucleotide sequence ID" value="NC_009004.1"/>
</dbReference>
<dbReference type="SMR" id="A2RH74"/>
<dbReference type="STRING" id="416870.llmg_0001"/>
<dbReference type="GeneID" id="61108328"/>
<dbReference type="KEGG" id="llm:llmg_0001"/>
<dbReference type="eggNOG" id="COG0593">
    <property type="taxonomic scope" value="Bacteria"/>
</dbReference>
<dbReference type="HOGENOM" id="CLU_026910_3_2_9"/>
<dbReference type="OrthoDB" id="9807019at2"/>
<dbReference type="PhylomeDB" id="A2RH74"/>
<dbReference type="Proteomes" id="UP000000364">
    <property type="component" value="Chromosome"/>
</dbReference>
<dbReference type="GO" id="GO:0005737">
    <property type="term" value="C:cytoplasm"/>
    <property type="evidence" value="ECO:0007669"/>
    <property type="project" value="UniProtKB-SubCell"/>
</dbReference>
<dbReference type="GO" id="GO:0005886">
    <property type="term" value="C:plasma membrane"/>
    <property type="evidence" value="ECO:0007669"/>
    <property type="project" value="TreeGrafter"/>
</dbReference>
<dbReference type="GO" id="GO:0005524">
    <property type="term" value="F:ATP binding"/>
    <property type="evidence" value="ECO:0007669"/>
    <property type="project" value="UniProtKB-UniRule"/>
</dbReference>
<dbReference type="GO" id="GO:0016887">
    <property type="term" value="F:ATP hydrolysis activity"/>
    <property type="evidence" value="ECO:0007669"/>
    <property type="project" value="InterPro"/>
</dbReference>
<dbReference type="GO" id="GO:0003688">
    <property type="term" value="F:DNA replication origin binding"/>
    <property type="evidence" value="ECO:0007669"/>
    <property type="project" value="UniProtKB-UniRule"/>
</dbReference>
<dbReference type="GO" id="GO:0008289">
    <property type="term" value="F:lipid binding"/>
    <property type="evidence" value="ECO:0007669"/>
    <property type="project" value="UniProtKB-KW"/>
</dbReference>
<dbReference type="GO" id="GO:0006270">
    <property type="term" value="P:DNA replication initiation"/>
    <property type="evidence" value="ECO:0007669"/>
    <property type="project" value="UniProtKB-UniRule"/>
</dbReference>
<dbReference type="GO" id="GO:0006275">
    <property type="term" value="P:regulation of DNA replication"/>
    <property type="evidence" value="ECO:0007669"/>
    <property type="project" value="UniProtKB-UniRule"/>
</dbReference>
<dbReference type="CDD" id="cd00009">
    <property type="entry name" value="AAA"/>
    <property type="match status" value="1"/>
</dbReference>
<dbReference type="CDD" id="cd06571">
    <property type="entry name" value="Bac_DnaA_C"/>
    <property type="match status" value="1"/>
</dbReference>
<dbReference type="FunFam" id="3.40.50.300:FF:000668">
    <property type="entry name" value="Chromosomal replication initiator protein DnaA"/>
    <property type="match status" value="1"/>
</dbReference>
<dbReference type="Gene3D" id="1.10.1750.10">
    <property type="match status" value="1"/>
</dbReference>
<dbReference type="Gene3D" id="1.10.8.60">
    <property type="match status" value="1"/>
</dbReference>
<dbReference type="Gene3D" id="3.30.300.180">
    <property type="match status" value="1"/>
</dbReference>
<dbReference type="Gene3D" id="3.40.50.300">
    <property type="entry name" value="P-loop containing nucleotide triphosphate hydrolases"/>
    <property type="match status" value="1"/>
</dbReference>
<dbReference type="HAMAP" id="MF_00377">
    <property type="entry name" value="DnaA_bact"/>
    <property type="match status" value="1"/>
</dbReference>
<dbReference type="InterPro" id="IPR003593">
    <property type="entry name" value="AAA+_ATPase"/>
</dbReference>
<dbReference type="InterPro" id="IPR001957">
    <property type="entry name" value="Chromosome_initiator_DnaA"/>
</dbReference>
<dbReference type="InterPro" id="IPR020591">
    <property type="entry name" value="Chromosome_initiator_DnaA-like"/>
</dbReference>
<dbReference type="InterPro" id="IPR018312">
    <property type="entry name" value="Chromosome_initiator_DnaA_CS"/>
</dbReference>
<dbReference type="InterPro" id="IPR013159">
    <property type="entry name" value="DnaA_C"/>
</dbReference>
<dbReference type="InterPro" id="IPR013317">
    <property type="entry name" value="DnaA_dom"/>
</dbReference>
<dbReference type="InterPro" id="IPR038454">
    <property type="entry name" value="DnaA_N_sf"/>
</dbReference>
<dbReference type="InterPro" id="IPR027417">
    <property type="entry name" value="P-loop_NTPase"/>
</dbReference>
<dbReference type="InterPro" id="IPR010921">
    <property type="entry name" value="Trp_repressor/repl_initiator"/>
</dbReference>
<dbReference type="NCBIfam" id="TIGR00362">
    <property type="entry name" value="DnaA"/>
    <property type="match status" value="1"/>
</dbReference>
<dbReference type="PANTHER" id="PTHR30050">
    <property type="entry name" value="CHROMOSOMAL REPLICATION INITIATOR PROTEIN DNAA"/>
    <property type="match status" value="1"/>
</dbReference>
<dbReference type="PANTHER" id="PTHR30050:SF2">
    <property type="entry name" value="CHROMOSOMAL REPLICATION INITIATOR PROTEIN DNAA"/>
    <property type="match status" value="1"/>
</dbReference>
<dbReference type="Pfam" id="PF00308">
    <property type="entry name" value="Bac_DnaA"/>
    <property type="match status" value="1"/>
</dbReference>
<dbReference type="Pfam" id="PF08299">
    <property type="entry name" value="Bac_DnaA_C"/>
    <property type="match status" value="1"/>
</dbReference>
<dbReference type="PRINTS" id="PR00051">
    <property type="entry name" value="DNAA"/>
</dbReference>
<dbReference type="SMART" id="SM00382">
    <property type="entry name" value="AAA"/>
    <property type="match status" value="1"/>
</dbReference>
<dbReference type="SMART" id="SM00760">
    <property type="entry name" value="Bac_DnaA_C"/>
    <property type="match status" value="1"/>
</dbReference>
<dbReference type="SUPFAM" id="SSF52540">
    <property type="entry name" value="P-loop containing nucleoside triphosphate hydrolases"/>
    <property type="match status" value="1"/>
</dbReference>
<dbReference type="SUPFAM" id="SSF48295">
    <property type="entry name" value="TrpR-like"/>
    <property type="match status" value="1"/>
</dbReference>
<dbReference type="PROSITE" id="PS01008">
    <property type="entry name" value="DNAA"/>
    <property type="match status" value="1"/>
</dbReference>
<gene>
    <name evidence="1" type="primary">dnaA</name>
    <name type="ordered locus">llmg_0001</name>
</gene>
<proteinExistence type="inferred from homology"/>
<reference key="1">
    <citation type="journal article" date="2007" name="J. Bacteriol.">
        <title>The complete genome sequence of the lactic acid bacterial paradigm Lactococcus lactis subsp. cremoris MG1363.</title>
        <authorList>
            <person name="Wegmann U."/>
            <person name="O'Connell-Motherway M."/>
            <person name="Zomer A."/>
            <person name="Buist G."/>
            <person name="Shearman C."/>
            <person name="Canchaya C."/>
            <person name="Ventura M."/>
            <person name="Goesmann A."/>
            <person name="Gasson M.J."/>
            <person name="Kuipers O.P."/>
            <person name="van Sinderen D."/>
            <person name="Kok J."/>
        </authorList>
    </citation>
    <scope>NUCLEOTIDE SEQUENCE [LARGE SCALE GENOMIC DNA]</scope>
    <source>
        <strain>MG1363</strain>
    </source>
</reference>
<name>DNAA_LACLM</name>
<sequence>MASLNENQKFWARVTELARQSIGKQAYDFFIEPAQLMSVEQDTANILLDSGMKKDYWKKQSDLITTAGFEVFGRMIDYELYANDELTDIELRRLNNQSPVDEPLSVAKPTSPLVSGLNEKYNFENFVQGPGNRWTLAAAIAVADKPGDTYNPLFIYGGAGLGKTHLMHAIGNQILTDNPTARIKYVSSENFVNDYVNATRKNQMESFENTYRNLDLLLLDDVQFFSDKEGTKNEFFNTFNALYDKGSQIVLTSDRIPQELNNLEDRLVSRFSWGLTTDITAPDYETRMAILLIKSESSHLEFPSETLSYIAGQIDSNVRELEGALNRVEFVARANGISIVDIETASQALRSLKNATQQSLSNLTIKKIQDEVANYYHISFSDLVGPKRPKEIAFPRQIAMYLVRELLGTSLPAIGTAFGGRDHTTVMYAYKQISDKMKNDMDVQKDIDSIKRKF</sequence>
<comment type="function">
    <text evidence="1">Plays an essential role in the initiation and regulation of chromosomal replication. ATP-DnaA binds to the origin of replication (oriC) to initiate formation of the DNA replication initiation complex once per cell cycle. Binds the DnaA box (a 9 base pair repeat at the origin) and separates the double-stranded (ds)DNA. Forms a right-handed helical filament on oriC DNA; dsDNA binds to the exterior of the filament while single-stranded (ss)DNA is stabiized in the filament's interior. The ATP-DnaA-oriC complex binds and stabilizes one strand of the AT-rich DNA unwinding element (DUE), permitting loading of DNA polymerase. After initiation quickly degrades to an ADP-DnaA complex that is not apt for DNA replication. Binds acidic phospholipids.</text>
</comment>
<comment type="subunit">
    <text evidence="1">Oligomerizes as a right-handed, spiral filament on DNA at oriC.</text>
</comment>
<comment type="subcellular location">
    <subcellularLocation>
        <location evidence="1">Cytoplasm</location>
    </subcellularLocation>
</comment>
<comment type="domain">
    <text evidence="1">Domain I is involved in oligomerization and binding regulators, domain II is flexibile and of varying length in different bacteria, domain III forms the AAA+ region, while domain IV binds dsDNA.</text>
</comment>
<comment type="similarity">
    <text evidence="1">Belongs to the DnaA family.</text>
</comment>
<keyword id="KW-0067">ATP-binding</keyword>
<keyword id="KW-0963">Cytoplasm</keyword>
<keyword id="KW-0235">DNA replication</keyword>
<keyword id="KW-0238">DNA-binding</keyword>
<keyword id="KW-0446">Lipid-binding</keyword>
<keyword id="KW-0547">Nucleotide-binding</keyword>
<feature type="chain" id="PRO_1000048663" description="Chromosomal replication initiator protein DnaA">
    <location>
        <begin position="1"/>
        <end position="454"/>
    </location>
</feature>
<feature type="region of interest" description="Domain I, interacts with DnaA modulators" evidence="1">
    <location>
        <begin position="1"/>
        <end position="77"/>
    </location>
</feature>
<feature type="region of interest" description="Domain II" evidence="1">
    <location>
        <begin position="77"/>
        <end position="115"/>
    </location>
</feature>
<feature type="region of interest" description="Domain III, AAA+ region" evidence="1">
    <location>
        <begin position="116"/>
        <end position="332"/>
    </location>
</feature>
<feature type="region of interest" description="Domain IV, binds dsDNA" evidence="1">
    <location>
        <begin position="333"/>
        <end position="454"/>
    </location>
</feature>
<feature type="binding site" evidence="1">
    <location>
        <position position="160"/>
    </location>
    <ligand>
        <name>ATP</name>
        <dbReference type="ChEBI" id="CHEBI:30616"/>
    </ligand>
</feature>
<feature type="binding site" evidence="1">
    <location>
        <position position="162"/>
    </location>
    <ligand>
        <name>ATP</name>
        <dbReference type="ChEBI" id="CHEBI:30616"/>
    </ligand>
</feature>
<feature type="binding site" evidence="1">
    <location>
        <position position="163"/>
    </location>
    <ligand>
        <name>ATP</name>
        <dbReference type="ChEBI" id="CHEBI:30616"/>
    </ligand>
</feature>
<feature type="binding site" evidence="1">
    <location>
        <position position="164"/>
    </location>
    <ligand>
        <name>ATP</name>
        <dbReference type="ChEBI" id="CHEBI:30616"/>
    </ligand>
</feature>
<organism>
    <name type="scientific">Lactococcus lactis subsp. cremoris (strain MG1363)</name>
    <dbReference type="NCBI Taxonomy" id="416870"/>
    <lineage>
        <taxon>Bacteria</taxon>
        <taxon>Bacillati</taxon>
        <taxon>Bacillota</taxon>
        <taxon>Bacilli</taxon>
        <taxon>Lactobacillales</taxon>
        <taxon>Streptococcaceae</taxon>
        <taxon>Lactococcus</taxon>
        <taxon>Lactococcus cremoris subsp. cremoris</taxon>
    </lineage>
</organism>
<accession>A2RH74</accession>
<protein>
    <recommendedName>
        <fullName evidence="1">Chromosomal replication initiator protein DnaA</fullName>
    </recommendedName>
</protein>
<evidence type="ECO:0000255" key="1">
    <source>
        <dbReference type="HAMAP-Rule" id="MF_00377"/>
    </source>
</evidence>